<proteinExistence type="inferred from homology"/>
<sequence length="477" mass="51051">MKVTLPEFERAGVMVVGDVMLDRYWYGPTSRISPEAPVPVVKVNTIEERPGGAANVAMNIASLGANARLVGLTGIDDAARALSKSLADVNVKCDFVSVPTHPTITKLRVLSRNQQLIRLDFEEGFEGVDPQPLHERINQALSSIGALVLSDYAKGALASVQQMIQLARKAGVPVLIDPKGTDFERYRGATLLTPNLSEFEAVVGKCKTEEEIVERGMKLIADYELSALLVTRSEQGMSLLQPGKAPLHMPTQAQEVYDVTGAGDTVIGVLAATLAAGNSLEEACFFANAAAGVVVGKLGTSTVSPIELENAVRGRADTGFGVMTEEELKLAVAAARKRGEKVVMTNGVFDILHAGHVSYLANARKLGDRLIVAVNSDASTKRLKGDSRPVNPLEQRMIVLGALEAVDWVVSFEEDTPQRLIAGILPDLLVKGGDYKPEEIAGSKEVWANGGEVLVLNFEDGCSTTNIIKKIQQDKKG</sequence>
<keyword id="KW-0007">Acetylation</keyword>
<keyword id="KW-0067">ATP-binding</keyword>
<keyword id="KW-0119">Carbohydrate metabolism</keyword>
<keyword id="KW-0418">Kinase</keyword>
<keyword id="KW-0511">Multifunctional enzyme</keyword>
<keyword id="KW-0547">Nucleotide-binding</keyword>
<keyword id="KW-0548">Nucleotidyltransferase</keyword>
<keyword id="KW-0808">Transferase</keyword>
<name>HLDE_ECOLC</name>
<feature type="chain" id="PRO_1000185807" description="Bifunctional protein HldE">
    <location>
        <begin position="1"/>
        <end position="477"/>
    </location>
</feature>
<feature type="region of interest" description="Ribokinase">
    <location>
        <begin position="1"/>
        <end position="318"/>
    </location>
</feature>
<feature type="region of interest" description="Cytidylyltransferase">
    <location>
        <begin position="344"/>
        <end position="477"/>
    </location>
</feature>
<feature type="active site" evidence="1">
    <location>
        <position position="264"/>
    </location>
</feature>
<feature type="binding site" evidence="1">
    <location>
        <begin position="195"/>
        <end position="198"/>
    </location>
    <ligand>
        <name>ATP</name>
        <dbReference type="ChEBI" id="CHEBI:30616"/>
    </ligand>
</feature>
<feature type="modified residue" description="N6-acetyllysine" evidence="1">
    <location>
        <position position="179"/>
    </location>
</feature>
<organism>
    <name type="scientific">Escherichia coli (strain ATCC 8739 / DSM 1576 / NBRC 3972 / NCIMB 8545 / WDCM 00012 / Crooks)</name>
    <dbReference type="NCBI Taxonomy" id="481805"/>
    <lineage>
        <taxon>Bacteria</taxon>
        <taxon>Pseudomonadati</taxon>
        <taxon>Pseudomonadota</taxon>
        <taxon>Gammaproteobacteria</taxon>
        <taxon>Enterobacterales</taxon>
        <taxon>Enterobacteriaceae</taxon>
        <taxon>Escherichia</taxon>
    </lineage>
</organism>
<gene>
    <name evidence="1" type="primary">hldE</name>
    <name type="ordered locus">EcolC_0647</name>
</gene>
<protein>
    <recommendedName>
        <fullName evidence="1">Bifunctional protein HldE</fullName>
    </recommendedName>
    <domain>
        <recommendedName>
            <fullName evidence="1">D-beta-D-heptose 7-phosphate kinase</fullName>
            <ecNumber evidence="1">2.7.1.167</ecNumber>
        </recommendedName>
        <alternativeName>
            <fullName evidence="1">D-beta-D-heptose 7-phosphotransferase</fullName>
        </alternativeName>
        <alternativeName>
            <fullName evidence="1">D-glycero-beta-D-manno-heptose-7-phosphate kinase</fullName>
        </alternativeName>
    </domain>
    <domain>
        <recommendedName>
            <fullName evidence="1">D-beta-D-heptose 1-phosphate adenylyltransferase</fullName>
            <ecNumber evidence="1">2.7.7.70</ecNumber>
        </recommendedName>
        <alternativeName>
            <fullName evidence="1">D-glycero-beta-D-manno-heptose 1-phosphate adenylyltransferase</fullName>
        </alternativeName>
    </domain>
</protein>
<evidence type="ECO:0000255" key="1">
    <source>
        <dbReference type="HAMAP-Rule" id="MF_01603"/>
    </source>
</evidence>
<comment type="function">
    <text evidence="1">Catalyzes the phosphorylation of D-glycero-D-manno-heptose 7-phosphate at the C-1 position to selectively form D-glycero-beta-D-manno-heptose-1,7-bisphosphate.</text>
</comment>
<comment type="function">
    <text evidence="1">Catalyzes the ADP transfer from ATP to D-glycero-beta-D-manno-heptose 1-phosphate, yielding ADP-D-glycero-beta-D-manno-heptose.</text>
</comment>
<comment type="catalytic activity">
    <reaction evidence="1">
        <text>D-glycero-beta-D-manno-heptose 7-phosphate + ATP = D-glycero-beta-D-manno-heptose 1,7-bisphosphate + ADP + H(+)</text>
        <dbReference type="Rhea" id="RHEA:27473"/>
        <dbReference type="ChEBI" id="CHEBI:15378"/>
        <dbReference type="ChEBI" id="CHEBI:30616"/>
        <dbReference type="ChEBI" id="CHEBI:60204"/>
        <dbReference type="ChEBI" id="CHEBI:60208"/>
        <dbReference type="ChEBI" id="CHEBI:456216"/>
        <dbReference type="EC" id="2.7.1.167"/>
    </reaction>
</comment>
<comment type="catalytic activity">
    <reaction evidence="1">
        <text>D-glycero-beta-D-manno-heptose 1-phosphate + ATP + H(+) = ADP-D-glycero-beta-D-manno-heptose + diphosphate</text>
        <dbReference type="Rhea" id="RHEA:27465"/>
        <dbReference type="ChEBI" id="CHEBI:15378"/>
        <dbReference type="ChEBI" id="CHEBI:30616"/>
        <dbReference type="ChEBI" id="CHEBI:33019"/>
        <dbReference type="ChEBI" id="CHEBI:59967"/>
        <dbReference type="ChEBI" id="CHEBI:61593"/>
        <dbReference type="EC" id="2.7.7.70"/>
    </reaction>
</comment>
<comment type="pathway">
    <text evidence="1">Nucleotide-sugar biosynthesis; ADP-L-glycero-beta-D-manno-heptose biosynthesis; ADP-L-glycero-beta-D-manno-heptose from D-glycero-beta-D-manno-heptose 7-phosphate: step 1/4.</text>
</comment>
<comment type="pathway">
    <text evidence="1">Nucleotide-sugar biosynthesis; ADP-L-glycero-beta-D-manno-heptose biosynthesis; ADP-L-glycero-beta-D-manno-heptose from D-glycero-beta-D-manno-heptose 7-phosphate: step 3/4.</text>
</comment>
<comment type="subunit">
    <text evidence="1">Homodimer.</text>
</comment>
<comment type="similarity">
    <text evidence="1">In the N-terminal section; belongs to the carbohydrate kinase PfkB family.</text>
</comment>
<comment type="similarity">
    <text evidence="1">In the C-terminal section; belongs to the cytidylyltransferase family.</text>
</comment>
<reference key="1">
    <citation type="submission" date="2008-02" db="EMBL/GenBank/DDBJ databases">
        <title>Complete sequence of Escherichia coli C str. ATCC 8739.</title>
        <authorList>
            <person name="Copeland A."/>
            <person name="Lucas S."/>
            <person name="Lapidus A."/>
            <person name="Glavina del Rio T."/>
            <person name="Dalin E."/>
            <person name="Tice H."/>
            <person name="Bruce D."/>
            <person name="Goodwin L."/>
            <person name="Pitluck S."/>
            <person name="Kiss H."/>
            <person name="Brettin T."/>
            <person name="Detter J.C."/>
            <person name="Han C."/>
            <person name="Kuske C.R."/>
            <person name="Schmutz J."/>
            <person name="Larimer F."/>
            <person name="Land M."/>
            <person name="Hauser L."/>
            <person name="Kyrpides N."/>
            <person name="Mikhailova N."/>
            <person name="Ingram L."/>
            <person name="Richardson P."/>
        </authorList>
    </citation>
    <scope>NUCLEOTIDE SEQUENCE [LARGE SCALE GENOMIC DNA]</scope>
    <source>
        <strain>ATCC 8739 / DSM 1576 / NBRC 3972 / NCIMB 8545 / WDCM 00012 / Crooks</strain>
    </source>
</reference>
<dbReference type="EC" id="2.7.1.167" evidence="1"/>
<dbReference type="EC" id="2.7.7.70" evidence="1"/>
<dbReference type="EMBL" id="CP000946">
    <property type="protein sequence ID" value="ACA76323.1"/>
    <property type="molecule type" value="Genomic_DNA"/>
</dbReference>
<dbReference type="RefSeq" id="WP_000869178.1">
    <property type="nucleotide sequence ID" value="NZ_MTFT01000027.1"/>
</dbReference>
<dbReference type="SMR" id="B1IRR4"/>
<dbReference type="GeneID" id="75205361"/>
<dbReference type="KEGG" id="ecl:EcolC_0647"/>
<dbReference type="HOGENOM" id="CLU_021150_2_1_6"/>
<dbReference type="UniPathway" id="UPA00356">
    <property type="reaction ID" value="UER00437"/>
</dbReference>
<dbReference type="UniPathway" id="UPA00356">
    <property type="reaction ID" value="UER00439"/>
</dbReference>
<dbReference type="GO" id="GO:0005829">
    <property type="term" value="C:cytosol"/>
    <property type="evidence" value="ECO:0007669"/>
    <property type="project" value="TreeGrafter"/>
</dbReference>
<dbReference type="GO" id="GO:0005524">
    <property type="term" value="F:ATP binding"/>
    <property type="evidence" value="ECO:0007669"/>
    <property type="project" value="UniProtKB-UniRule"/>
</dbReference>
<dbReference type="GO" id="GO:0033785">
    <property type="term" value="F:heptose 7-phosphate kinase activity"/>
    <property type="evidence" value="ECO:0007669"/>
    <property type="project" value="UniProtKB-UniRule"/>
</dbReference>
<dbReference type="GO" id="GO:0033786">
    <property type="term" value="F:heptose-1-phosphate adenylyltransferase activity"/>
    <property type="evidence" value="ECO:0007669"/>
    <property type="project" value="UniProtKB-UniRule"/>
</dbReference>
<dbReference type="GO" id="GO:0016773">
    <property type="term" value="F:phosphotransferase activity, alcohol group as acceptor"/>
    <property type="evidence" value="ECO:0007669"/>
    <property type="project" value="InterPro"/>
</dbReference>
<dbReference type="GO" id="GO:0097171">
    <property type="term" value="P:ADP-L-glycero-beta-D-manno-heptose biosynthetic process"/>
    <property type="evidence" value="ECO:0007669"/>
    <property type="project" value="UniProtKB-UniPathway"/>
</dbReference>
<dbReference type="CDD" id="cd01172">
    <property type="entry name" value="RfaE_like"/>
    <property type="match status" value="1"/>
</dbReference>
<dbReference type="FunFam" id="3.40.1190.20:FF:000002">
    <property type="entry name" value="Bifunctional protein HldE"/>
    <property type="match status" value="1"/>
</dbReference>
<dbReference type="FunFam" id="3.40.50.620:FF:000028">
    <property type="entry name" value="Bifunctional protein HldE"/>
    <property type="match status" value="1"/>
</dbReference>
<dbReference type="Gene3D" id="3.40.1190.20">
    <property type="match status" value="1"/>
</dbReference>
<dbReference type="Gene3D" id="3.40.50.620">
    <property type="entry name" value="HUPs"/>
    <property type="match status" value="1"/>
</dbReference>
<dbReference type="HAMAP" id="MF_01603">
    <property type="entry name" value="HldE"/>
    <property type="match status" value="1"/>
</dbReference>
<dbReference type="InterPro" id="IPR023030">
    <property type="entry name" value="Bifunc_HldE"/>
</dbReference>
<dbReference type="InterPro" id="IPR002173">
    <property type="entry name" value="Carboh/pur_kinase_PfkB_CS"/>
</dbReference>
<dbReference type="InterPro" id="IPR004821">
    <property type="entry name" value="Cyt_trans-like"/>
</dbReference>
<dbReference type="InterPro" id="IPR011611">
    <property type="entry name" value="PfkB_dom"/>
</dbReference>
<dbReference type="InterPro" id="IPR011913">
    <property type="entry name" value="RfaE_dom_I"/>
</dbReference>
<dbReference type="InterPro" id="IPR011914">
    <property type="entry name" value="RfaE_dom_II"/>
</dbReference>
<dbReference type="InterPro" id="IPR029056">
    <property type="entry name" value="Ribokinase-like"/>
</dbReference>
<dbReference type="InterPro" id="IPR014729">
    <property type="entry name" value="Rossmann-like_a/b/a_fold"/>
</dbReference>
<dbReference type="NCBIfam" id="TIGR00125">
    <property type="entry name" value="cyt_tran_rel"/>
    <property type="match status" value="1"/>
</dbReference>
<dbReference type="NCBIfam" id="NF008454">
    <property type="entry name" value="PRK11316.1"/>
    <property type="match status" value="1"/>
</dbReference>
<dbReference type="NCBIfam" id="TIGR02198">
    <property type="entry name" value="rfaE_dom_I"/>
    <property type="match status" value="1"/>
</dbReference>
<dbReference type="NCBIfam" id="TIGR02199">
    <property type="entry name" value="rfaE_dom_II"/>
    <property type="match status" value="1"/>
</dbReference>
<dbReference type="PANTHER" id="PTHR46969">
    <property type="entry name" value="BIFUNCTIONAL PROTEIN HLDE"/>
    <property type="match status" value="1"/>
</dbReference>
<dbReference type="PANTHER" id="PTHR46969:SF1">
    <property type="entry name" value="BIFUNCTIONAL PROTEIN HLDE"/>
    <property type="match status" value="1"/>
</dbReference>
<dbReference type="Pfam" id="PF01467">
    <property type="entry name" value="CTP_transf_like"/>
    <property type="match status" value="1"/>
</dbReference>
<dbReference type="Pfam" id="PF00294">
    <property type="entry name" value="PfkB"/>
    <property type="match status" value="1"/>
</dbReference>
<dbReference type="SUPFAM" id="SSF52374">
    <property type="entry name" value="Nucleotidylyl transferase"/>
    <property type="match status" value="1"/>
</dbReference>
<dbReference type="SUPFAM" id="SSF53613">
    <property type="entry name" value="Ribokinase-like"/>
    <property type="match status" value="1"/>
</dbReference>
<dbReference type="PROSITE" id="PS00583">
    <property type="entry name" value="PFKB_KINASES_1"/>
    <property type="match status" value="1"/>
</dbReference>
<accession>B1IRR4</accession>